<organism>
    <name type="scientific">Bacillus pumilus (strain SAFR-032)</name>
    <dbReference type="NCBI Taxonomy" id="315750"/>
    <lineage>
        <taxon>Bacteria</taxon>
        <taxon>Bacillati</taxon>
        <taxon>Bacillota</taxon>
        <taxon>Bacilli</taxon>
        <taxon>Bacillales</taxon>
        <taxon>Bacillaceae</taxon>
        <taxon>Bacillus</taxon>
    </lineage>
</organism>
<accession>A8FFL2</accession>
<gene>
    <name type="primary">yrrT</name>
    <name type="ordered locus">BPUM_2363</name>
</gene>
<name>Y2363_BACP2</name>
<proteinExistence type="inferred from homology"/>
<reference key="1">
    <citation type="journal article" date="2007" name="PLoS ONE">
        <title>Paradoxical DNA repair and peroxide resistance gene conservation in Bacillus pumilus SAFR-032.</title>
        <authorList>
            <person name="Gioia J."/>
            <person name="Yerrapragada S."/>
            <person name="Qin X."/>
            <person name="Jiang H."/>
            <person name="Igboeli O.C."/>
            <person name="Muzny D."/>
            <person name="Dugan-Rocha S."/>
            <person name="Ding Y."/>
            <person name="Hawes A."/>
            <person name="Liu W."/>
            <person name="Perez L."/>
            <person name="Kovar C."/>
            <person name="Dinh H."/>
            <person name="Lee S."/>
            <person name="Nazareth L."/>
            <person name="Blyth P."/>
            <person name="Holder M."/>
            <person name="Buhay C."/>
            <person name="Tirumalai M.R."/>
            <person name="Liu Y."/>
            <person name="Dasgupta I."/>
            <person name="Bokhetache L."/>
            <person name="Fujita M."/>
            <person name="Karouia F."/>
            <person name="Eswara Moorthy P."/>
            <person name="Siefert J."/>
            <person name="Uzman A."/>
            <person name="Buzumbo P."/>
            <person name="Verma A."/>
            <person name="Zwiya H."/>
            <person name="McWilliams B.D."/>
            <person name="Olowu A."/>
            <person name="Clinkenbeard K.D."/>
            <person name="Newcombe D."/>
            <person name="Golebiewski L."/>
            <person name="Petrosino J.F."/>
            <person name="Nicholson W.L."/>
            <person name="Fox G.E."/>
            <person name="Venkateswaran K."/>
            <person name="Highlander S.K."/>
            <person name="Weinstock G.M."/>
        </authorList>
    </citation>
    <scope>NUCLEOTIDE SEQUENCE [LARGE SCALE GENOMIC DNA]</scope>
    <source>
        <strain>SAFR-032</strain>
    </source>
</reference>
<dbReference type="EC" id="2.1.1.-" evidence="1"/>
<dbReference type="EMBL" id="CP000813">
    <property type="protein sequence ID" value="ABV63029.1"/>
    <property type="molecule type" value="Genomic_DNA"/>
</dbReference>
<dbReference type="RefSeq" id="WP_012010703.1">
    <property type="nucleotide sequence ID" value="NZ_VEIC01000028.1"/>
</dbReference>
<dbReference type="SMR" id="A8FFL2"/>
<dbReference type="STRING" id="315750.BPUM_2363"/>
<dbReference type="GeneID" id="5621625"/>
<dbReference type="KEGG" id="bpu:BPUM_2363"/>
<dbReference type="eggNOG" id="COG2226">
    <property type="taxonomic scope" value="Bacteria"/>
</dbReference>
<dbReference type="HOGENOM" id="CLU_111961_0_0_9"/>
<dbReference type="OrthoDB" id="465705at2"/>
<dbReference type="Proteomes" id="UP000001355">
    <property type="component" value="Chromosome"/>
</dbReference>
<dbReference type="GO" id="GO:0008757">
    <property type="term" value="F:S-adenosylmethionine-dependent methyltransferase activity"/>
    <property type="evidence" value="ECO:0007669"/>
    <property type="project" value="UniProtKB-UniRule"/>
</dbReference>
<dbReference type="GO" id="GO:0032259">
    <property type="term" value="P:methylation"/>
    <property type="evidence" value="ECO:0007669"/>
    <property type="project" value="UniProtKB-KW"/>
</dbReference>
<dbReference type="CDD" id="cd02440">
    <property type="entry name" value="AdoMet_MTases"/>
    <property type="match status" value="1"/>
</dbReference>
<dbReference type="Gene3D" id="3.40.50.150">
    <property type="entry name" value="Vaccinia Virus protein VP39"/>
    <property type="match status" value="1"/>
</dbReference>
<dbReference type="HAMAP" id="MF_02100">
    <property type="entry name" value="Methyltr_YrrT"/>
    <property type="match status" value="1"/>
</dbReference>
<dbReference type="InterPro" id="IPR041698">
    <property type="entry name" value="Methyltransf_25"/>
</dbReference>
<dbReference type="InterPro" id="IPR029063">
    <property type="entry name" value="SAM-dependent_MTases_sf"/>
</dbReference>
<dbReference type="InterPro" id="IPR023553">
    <property type="entry name" value="Uncharacterised_MeTfrase_YrrT"/>
</dbReference>
<dbReference type="PANTHER" id="PTHR43861:SF1">
    <property type="entry name" value="TRANS-ACONITATE 2-METHYLTRANSFERASE"/>
    <property type="match status" value="1"/>
</dbReference>
<dbReference type="PANTHER" id="PTHR43861">
    <property type="entry name" value="TRANS-ACONITATE 2-METHYLTRANSFERASE-RELATED"/>
    <property type="match status" value="1"/>
</dbReference>
<dbReference type="Pfam" id="PF13649">
    <property type="entry name" value="Methyltransf_25"/>
    <property type="match status" value="1"/>
</dbReference>
<dbReference type="SUPFAM" id="SSF53335">
    <property type="entry name" value="S-adenosyl-L-methionine-dependent methyltransferases"/>
    <property type="match status" value="1"/>
</dbReference>
<protein>
    <recommendedName>
        <fullName evidence="1">Uncharacterized methyltransferase BPUM_2363</fullName>
        <ecNumber evidence="1">2.1.1.-</ecNumber>
    </recommendedName>
</protein>
<evidence type="ECO:0000255" key="1">
    <source>
        <dbReference type="HAMAP-Rule" id="MF_02100"/>
    </source>
</evidence>
<feature type="chain" id="PRO_0000373847" description="Uncharacterized methyltransferase BPUM_2363">
    <location>
        <begin position="1"/>
        <end position="213"/>
    </location>
</feature>
<feature type="binding site" evidence="1">
    <location>
        <position position="53"/>
    </location>
    <ligand>
        <name>S-adenosyl-L-methionine</name>
        <dbReference type="ChEBI" id="CHEBI:59789"/>
    </ligand>
</feature>
<feature type="binding site" evidence="1">
    <location>
        <position position="74"/>
    </location>
    <ligand>
        <name>S-adenosyl-L-methionine</name>
        <dbReference type="ChEBI" id="CHEBI:59789"/>
    </ligand>
</feature>
<feature type="binding site" evidence="1">
    <location>
        <position position="96"/>
    </location>
    <ligand>
        <name>S-adenosyl-L-methionine</name>
        <dbReference type="ChEBI" id="CHEBI:59789"/>
    </ligand>
</feature>
<sequence length="213" mass="24127">MGREFLSLFDHWADSYDDTVSGHDEQYEEVFRRYSVILKEIVHRAGQHVLEFGSGTGNLTAALLAADKNVFGVEPSDAMKKAALQKGIPDVFHDGDFLSFPAPPFEPDTIVSSYAFHHLTDEEKKQAIHTYSNILHSDGKIVFADTMFQNQSAHQAEIDKAKAAGFDQLAEDLETEYYPSIDVLKQIFEEEGFSTSFHQMNDFVWIVEAKKRE</sequence>
<keyword id="KW-0489">Methyltransferase</keyword>
<keyword id="KW-0949">S-adenosyl-L-methionine</keyword>
<keyword id="KW-0808">Transferase</keyword>
<comment type="function">
    <text evidence="1">Could be a S-adenosyl-L-methionine-dependent methyltransferase.</text>
</comment>
<comment type="similarity">
    <text evidence="1">Belongs to the methyltransferase superfamily. YrrT family.</text>
</comment>